<feature type="chain" id="PRO_1000091344" description="Leucine--tRNA ligase">
    <location>
        <begin position="1"/>
        <end position="806"/>
    </location>
</feature>
<feature type="short sequence motif" description="'HIGH' region">
    <location>
        <begin position="40"/>
        <end position="51"/>
    </location>
</feature>
<feature type="short sequence motif" description="'KMSKS' region">
    <location>
        <begin position="576"/>
        <end position="580"/>
    </location>
</feature>
<feature type="binding site" evidence="1">
    <location>
        <position position="579"/>
    </location>
    <ligand>
        <name>ATP</name>
        <dbReference type="ChEBI" id="CHEBI:30616"/>
    </ligand>
</feature>
<reference key="1">
    <citation type="submission" date="2008-06" db="EMBL/GenBank/DDBJ databases">
        <title>Complete sequence of chromosome of Prosthecochloris aestuarii DSM 271.</title>
        <authorList>
            <consortium name="US DOE Joint Genome Institute"/>
            <person name="Lucas S."/>
            <person name="Copeland A."/>
            <person name="Lapidus A."/>
            <person name="Glavina del Rio T."/>
            <person name="Dalin E."/>
            <person name="Tice H."/>
            <person name="Bruce D."/>
            <person name="Goodwin L."/>
            <person name="Pitluck S."/>
            <person name="Schmutz J."/>
            <person name="Larimer F."/>
            <person name="Land M."/>
            <person name="Hauser L."/>
            <person name="Kyrpides N."/>
            <person name="Anderson I."/>
            <person name="Liu Z."/>
            <person name="Li T."/>
            <person name="Zhao F."/>
            <person name="Overmann J."/>
            <person name="Bryant D.A."/>
            <person name="Richardson P."/>
        </authorList>
    </citation>
    <scope>NUCLEOTIDE SEQUENCE [LARGE SCALE GENOMIC DNA]</scope>
    <source>
        <strain>DSM 271 / SK 413</strain>
    </source>
</reference>
<gene>
    <name evidence="1" type="primary">leuS</name>
    <name type="ordered locus">Paes_0505</name>
</gene>
<proteinExistence type="inferred from homology"/>
<organism>
    <name type="scientific">Prosthecochloris aestuarii (strain DSM 271 / SK 413)</name>
    <dbReference type="NCBI Taxonomy" id="290512"/>
    <lineage>
        <taxon>Bacteria</taxon>
        <taxon>Pseudomonadati</taxon>
        <taxon>Chlorobiota</taxon>
        <taxon>Chlorobiia</taxon>
        <taxon>Chlorobiales</taxon>
        <taxon>Chlorobiaceae</taxon>
        <taxon>Prosthecochloris</taxon>
    </lineage>
</organism>
<accession>B4S5G4</accession>
<keyword id="KW-0030">Aminoacyl-tRNA synthetase</keyword>
<keyword id="KW-0067">ATP-binding</keyword>
<keyword id="KW-0963">Cytoplasm</keyword>
<keyword id="KW-0436">Ligase</keyword>
<keyword id="KW-0547">Nucleotide-binding</keyword>
<keyword id="KW-0648">Protein biosynthesis</keyword>
<evidence type="ECO:0000255" key="1">
    <source>
        <dbReference type="HAMAP-Rule" id="MF_00049"/>
    </source>
</evidence>
<name>SYL_PROA2</name>
<sequence>MRYEFSTIEQKWQKYWADNQTFLTDDNPDKPKYYVLDMFPYPSGTGLHVGHLEGYTATDIIARYKRSRGFNVLHPMGWDAFGLPAEQFAIKTGTHPTTTTQKNVSSFRQTLQNMGFSYDWSREINTTDPNYFRWTQWIFLQLLDKGLAYMSEVDVNWCEDLRVVLANEEVDEKIAAGHTVVRKPLRQWVLKITAYAERLLGDLDELDWPENVKQMQRNWIGRSEGVEIDFELPCHRQKLTVYTTRPDTLFGASYLVISPEHPLAEKLATAPQLVELKNYIREAKLKTELERTGLQKEKTGVFTGSYAINPANGEALPVWVSDFVLTSYGTGAIMSVPAHDSRDWEFAKKFGLPIIEVIQSPHDVQDEVFEGKESICVNSSNNEISLDGLDFTSAFKRMADWIESSGKGRRKINYKLRDWIFSRQRYWGEPIPVKHYDDGSLRPETDLPLTLPEVEAYHPSTTGESPLANIEDWLFGQDEHGAFRRETNTMPQWAGSCWYYLRFIDPSNQQQLVDPDKERYWMNVDLYIGGAEHAVLHLLYARFWHKVLYDLGVVSTKEPFQKLFNQGMILGEDNEKMSKSRGNVIPADHVMQSYGADAVRLYEMFLGPLEQVKPWNTNGIEGISRFLSRVWRIVYPEQEGPAMLTDTPLDDALTRRMHKTIKKVTEDTEHLKFNTAIAEMMVFVNELHKAGCRNRKALETLLLLLAPYAPHICEELWQAAGNNEPIARAPFPVFDPALAEDNELTIAVQVNGKLRGTFLAPAGLSKEAMIAGAREIESVKKFLEGMTIIKEIAVPGKLVNFAVKPL</sequence>
<protein>
    <recommendedName>
        <fullName evidence="1">Leucine--tRNA ligase</fullName>
        <ecNumber evidence="1">6.1.1.4</ecNumber>
    </recommendedName>
    <alternativeName>
        <fullName evidence="1">Leucyl-tRNA synthetase</fullName>
        <shortName evidence="1">LeuRS</shortName>
    </alternativeName>
</protein>
<comment type="catalytic activity">
    <reaction evidence="1">
        <text>tRNA(Leu) + L-leucine + ATP = L-leucyl-tRNA(Leu) + AMP + diphosphate</text>
        <dbReference type="Rhea" id="RHEA:11688"/>
        <dbReference type="Rhea" id="RHEA-COMP:9613"/>
        <dbReference type="Rhea" id="RHEA-COMP:9622"/>
        <dbReference type="ChEBI" id="CHEBI:30616"/>
        <dbReference type="ChEBI" id="CHEBI:33019"/>
        <dbReference type="ChEBI" id="CHEBI:57427"/>
        <dbReference type="ChEBI" id="CHEBI:78442"/>
        <dbReference type="ChEBI" id="CHEBI:78494"/>
        <dbReference type="ChEBI" id="CHEBI:456215"/>
        <dbReference type="EC" id="6.1.1.4"/>
    </reaction>
</comment>
<comment type="subcellular location">
    <subcellularLocation>
        <location evidence="1">Cytoplasm</location>
    </subcellularLocation>
</comment>
<comment type="similarity">
    <text evidence="1">Belongs to the class-I aminoacyl-tRNA synthetase family.</text>
</comment>
<dbReference type="EC" id="6.1.1.4" evidence="1"/>
<dbReference type="EMBL" id="CP001108">
    <property type="protein sequence ID" value="ACF45561.1"/>
    <property type="molecule type" value="Genomic_DNA"/>
</dbReference>
<dbReference type="RefSeq" id="WP_012505098.1">
    <property type="nucleotide sequence ID" value="NC_011059.1"/>
</dbReference>
<dbReference type="SMR" id="B4S5G4"/>
<dbReference type="STRING" id="290512.Paes_0505"/>
<dbReference type="KEGG" id="paa:Paes_0505"/>
<dbReference type="eggNOG" id="COG0495">
    <property type="taxonomic scope" value="Bacteria"/>
</dbReference>
<dbReference type="HOGENOM" id="CLU_004427_0_0_10"/>
<dbReference type="Proteomes" id="UP000002725">
    <property type="component" value="Chromosome"/>
</dbReference>
<dbReference type="GO" id="GO:0005829">
    <property type="term" value="C:cytosol"/>
    <property type="evidence" value="ECO:0007669"/>
    <property type="project" value="TreeGrafter"/>
</dbReference>
<dbReference type="GO" id="GO:0002161">
    <property type="term" value="F:aminoacyl-tRNA deacylase activity"/>
    <property type="evidence" value="ECO:0007669"/>
    <property type="project" value="InterPro"/>
</dbReference>
<dbReference type="GO" id="GO:0005524">
    <property type="term" value="F:ATP binding"/>
    <property type="evidence" value="ECO:0007669"/>
    <property type="project" value="UniProtKB-UniRule"/>
</dbReference>
<dbReference type="GO" id="GO:0004823">
    <property type="term" value="F:leucine-tRNA ligase activity"/>
    <property type="evidence" value="ECO:0007669"/>
    <property type="project" value="UniProtKB-UniRule"/>
</dbReference>
<dbReference type="GO" id="GO:0006429">
    <property type="term" value="P:leucyl-tRNA aminoacylation"/>
    <property type="evidence" value="ECO:0007669"/>
    <property type="project" value="UniProtKB-UniRule"/>
</dbReference>
<dbReference type="CDD" id="cd07958">
    <property type="entry name" value="Anticodon_Ia_Leu_BEm"/>
    <property type="match status" value="1"/>
</dbReference>
<dbReference type="CDD" id="cd00812">
    <property type="entry name" value="LeuRS_core"/>
    <property type="match status" value="1"/>
</dbReference>
<dbReference type="FunFam" id="3.40.50.620:FF:000056">
    <property type="entry name" value="Leucine--tRNA ligase"/>
    <property type="match status" value="1"/>
</dbReference>
<dbReference type="FunFam" id="3.40.50.620:FF:000077">
    <property type="entry name" value="Leucine--tRNA ligase"/>
    <property type="match status" value="1"/>
</dbReference>
<dbReference type="FunFam" id="1.10.730.10:FF:000011">
    <property type="entry name" value="Leucine--tRNA ligase chloroplastic/mitochondrial"/>
    <property type="match status" value="1"/>
</dbReference>
<dbReference type="Gene3D" id="3.10.20.590">
    <property type="match status" value="1"/>
</dbReference>
<dbReference type="Gene3D" id="3.40.50.620">
    <property type="entry name" value="HUPs"/>
    <property type="match status" value="2"/>
</dbReference>
<dbReference type="Gene3D" id="1.10.730.10">
    <property type="entry name" value="Isoleucyl-tRNA Synthetase, Domain 1"/>
    <property type="match status" value="1"/>
</dbReference>
<dbReference type="HAMAP" id="MF_00049_B">
    <property type="entry name" value="Leu_tRNA_synth_B"/>
    <property type="match status" value="1"/>
</dbReference>
<dbReference type="InterPro" id="IPR002300">
    <property type="entry name" value="aa-tRNA-synth_Ia"/>
</dbReference>
<dbReference type="InterPro" id="IPR002302">
    <property type="entry name" value="Leu-tRNA-ligase"/>
</dbReference>
<dbReference type="InterPro" id="IPR025709">
    <property type="entry name" value="Leu_tRNA-synth_edit"/>
</dbReference>
<dbReference type="InterPro" id="IPR013155">
    <property type="entry name" value="M/V/L/I-tRNA-synth_anticd-bd"/>
</dbReference>
<dbReference type="InterPro" id="IPR015413">
    <property type="entry name" value="Methionyl/Leucyl_tRNA_Synth"/>
</dbReference>
<dbReference type="InterPro" id="IPR014729">
    <property type="entry name" value="Rossmann-like_a/b/a_fold"/>
</dbReference>
<dbReference type="InterPro" id="IPR009080">
    <property type="entry name" value="tRNAsynth_Ia_anticodon-bd"/>
</dbReference>
<dbReference type="InterPro" id="IPR009008">
    <property type="entry name" value="Val/Leu/Ile-tRNA-synth_edit"/>
</dbReference>
<dbReference type="NCBIfam" id="TIGR00396">
    <property type="entry name" value="leuS_bact"/>
    <property type="match status" value="1"/>
</dbReference>
<dbReference type="PANTHER" id="PTHR43740:SF2">
    <property type="entry name" value="LEUCINE--TRNA LIGASE, MITOCHONDRIAL"/>
    <property type="match status" value="1"/>
</dbReference>
<dbReference type="PANTHER" id="PTHR43740">
    <property type="entry name" value="LEUCYL-TRNA SYNTHETASE"/>
    <property type="match status" value="1"/>
</dbReference>
<dbReference type="Pfam" id="PF08264">
    <property type="entry name" value="Anticodon_1"/>
    <property type="match status" value="1"/>
</dbReference>
<dbReference type="Pfam" id="PF00133">
    <property type="entry name" value="tRNA-synt_1"/>
    <property type="match status" value="1"/>
</dbReference>
<dbReference type="Pfam" id="PF13603">
    <property type="entry name" value="tRNA-synt_1_2"/>
    <property type="match status" value="1"/>
</dbReference>
<dbReference type="Pfam" id="PF09334">
    <property type="entry name" value="tRNA-synt_1g"/>
    <property type="match status" value="1"/>
</dbReference>
<dbReference type="PRINTS" id="PR00985">
    <property type="entry name" value="TRNASYNTHLEU"/>
</dbReference>
<dbReference type="SUPFAM" id="SSF47323">
    <property type="entry name" value="Anticodon-binding domain of a subclass of class I aminoacyl-tRNA synthetases"/>
    <property type="match status" value="1"/>
</dbReference>
<dbReference type="SUPFAM" id="SSF52374">
    <property type="entry name" value="Nucleotidylyl transferase"/>
    <property type="match status" value="1"/>
</dbReference>
<dbReference type="SUPFAM" id="SSF50677">
    <property type="entry name" value="ValRS/IleRS/LeuRS editing domain"/>
    <property type="match status" value="1"/>
</dbReference>